<gene>
    <name evidence="1" type="primary">trpF</name>
    <name type="ordered locus">Xfasm12_0727</name>
</gene>
<proteinExistence type="inferred from homology"/>
<reference key="1">
    <citation type="journal article" date="2010" name="J. Bacteriol.">
        <title>Whole genome sequences of two Xylella fastidiosa strains (M12 and M23) causing almond leaf scorch disease in California.</title>
        <authorList>
            <person name="Chen J."/>
            <person name="Xie G."/>
            <person name="Han S."/>
            <person name="Chertkov O."/>
            <person name="Sims D."/>
            <person name="Civerolo E.L."/>
        </authorList>
    </citation>
    <scope>NUCLEOTIDE SEQUENCE [LARGE SCALE GENOMIC DNA]</scope>
    <source>
        <strain>M12</strain>
    </source>
</reference>
<name>TRPF_XYLFM</name>
<keyword id="KW-0028">Amino-acid biosynthesis</keyword>
<keyword id="KW-0057">Aromatic amino acid biosynthesis</keyword>
<keyword id="KW-0413">Isomerase</keyword>
<keyword id="KW-0822">Tryptophan biosynthesis</keyword>
<accession>B0U6K5</accession>
<protein>
    <recommendedName>
        <fullName evidence="1">N-(5'-phosphoribosyl)anthranilate isomerase</fullName>
        <shortName evidence="1">PRAI</shortName>
        <ecNumber evidence="1">5.3.1.24</ecNumber>
    </recommendedName>
</protein>
<comment type="catalytic activity">
    <reaction evidence="1">
        <text>N-(5-phospho-beta-D-ribosyl)anthranilate = 1-(2-carboxyphenylamino)-1-deoxy-D-ribulose 5-phosphate</text>
        <dbReference type="Rhea" id="RHEA:21540"/>
        <dbReference type="ChEBI" id="CHEBI:18277"/>
        <dbReference type="ChEBI" id="CHEBI:58613"/>
        <dbReference type="EC" id="5.3.1.24"/>
    </reaction>
</comment>
<comment type="pathway">
    <text evidence="1">Amino-acid biosynthesis; L-tryptophan biosynthesis; L-tryptophan from chorismate: step 3/5.</text>
</comment>
<comment type="similarity">
    <text evidence="1">Belongs to the TrpF family.</text>
</comment>
<feature type="chain" id="PRO_1000095953" description="N-(5'-phosphoribosyl)anthranilate isomerase">
    <location>
        <begin position="1"/>
        <end position="220"/>
    </location>
</feature>
<dbReference type="EC" id="5.3.1.24" evidence="1"/>
<dbReference type="EMBL" id="CP000941">
    <property type="protein sequence ID" value="ACA11721.1"/>
    <property type="molecule type" value="Genomic_DNA"/>
</dbReference>
<dbReference type="RefSeq" id="WP_004083826.1">
    <property type="nucleotide sequence ID" value="NC_010513.1"/>
</dbReference>
<dbReference type="SMR" id="B0U6K5"/>
<dbReference type="KEGG" id="xfm:Xfasm12_0727"/>
<dbReference type="HOGENOM" id="CLU_076364_2_0_6"/>
<dbReference type="UniPathway" id="UPA00035">
    <property type="reaction ID" value="UER00042"/>
</dbReference>
<dbReference type="GO" id="GO:0004640">
    <property type="term" value="F:phosphoribosylanthranilate isomerase activity"/>
    <property type="evidence" value="ECO:0007669"/>
    <property type="project" value="UniProtKB-UniRule"/>
</dbReference>
<dbReference type="GO" id="GO:0000162">
    <property type="term" value="P:L-tryptophan biosynthetic process"/>
    <property type="evidence" value="ECO:0007669"/>
    <property type="project" value="UniProtKB-UniRule"/>
</dbReference>
<dbReference type="CDD" id="cd00405">
    <property type="entry name" value="PRAI"/>
    <property type="match status" value="1"/>
</dbReference>
<dbReference type="Gene3D" id="3.20.20.70">
    <property type="entry name" value="Aldolase class I"/>
    <property type="match status" value="1"/>
</dbReference>
<dbReference type="HAMAP" id="MF_00135">
    <property type="entry name" value="PRAI"/>
    <property type="match status" value="1"/>
</dbReference>
<dbReference type="InterPro" id="IPR013785">
    <property type="entry name" value="Aldolase_TIM"/>
</dbReference>
<dbReference type="InterPro" id="IPR001240">
    <property type="entry name" value="PRAI_dom"/>
</dbReference>
<dbReference type="InterPro" id="IPR011060">
    <property type="entry name" value="RibuloseP-bd_barrel"/>
</dbReference>
<dbReference type="InterPro" id="IPR044643">
    <property type="entry name" value="TrpF_fam"/>
</dbReference>
<dbReference type="NCBIfam" id="NF002296">
    <property type="entry name" value="PRK01222.1-2"/>
    <property type="match status" value="1"/>
</dbReference>
<dbReference type="PANTHER" id="PTHR42894">
    <property type="entry name" value="N-(5'-PHOSPHORIBOSYL)ANTHRANILATE ISOMERASE"/>
    <property type="match status" value="1"/>
</dbReference>
<dbReference type="PANTHER" id="PTHR42894:SF1">
    <property type="entry name" value="N-(5'-PHOSPHORIBOSYL)ANTHRANILATE ISOMERASE"/>
    <property type="match status" value="1"/>
</dbReference>
<dbReference type="Pfam" id="PF00697">
    <property type="entry name" value="PRAI"/>
    <property type="match status" value="1"/>
</dbReference>
<dbReference type="SUPFAM" id="SSF51366">
    <property type="entry name" value="Ribulose-phoshate binding barrel"/>
    <property type="match status" value="1"/>
</dbReference>
<sequence length="220" mass="24135">MNIPPYRTRIKFCGMTRVGDVRLASELGVDAVGLIFASGSSRLLTVSAACAIRRTVAPMVNVVALFQNNSADEIHTVVRTVRPTLLQFHGKEEDAFCRTFNVPYLKAIPMAGAEAKRICTRTLYLKYPNAAGFIFDSHLKGGTGQTFDWSRLPIDLHHPFLLAGGITPENVFDAIAATVPWGVDVSSGIELQPGIKDGDKMRQFVEEVRRADGRRQFGVA</sequence>
<organism>
    <name type="scientific">Xylella fastidiosa (strain M12)</name>
    <dbReference type="NCBI Taxonomy" id="405440"/>
    <lineage>
        <taxon>Bacteria</taxon>
        <taxon>Pseudomonadati</taxon>
        <taxon>Pseudomonadota</taxon>
        <taxon>Gammaproteobacteria</taxon>
        <taxon>Lysobacterales</taxon>
        <taxon>Lysobacteraceae</taxon>
        <taxon>Xylella</taxon>
    </lineage>
</organism>
<evidence type="ECO:0000255" key="1">
    <source>
        <dbReference type="HAMAP-Rule" id="MF_00135"/>
    </source>
</evidence>